<feature type="chain" id="PRO_0000157338" description="Glycerol-1-phosphate dehydrogenase [NAD(P)+]">
    <location>
        <begin position="1"/>
        <end position="352"/>
    </location>
</feature>
<feature type="binding site" evidence="1">
    <location>
        <begin position="99"/>
        <end position="103"/>
    </location>
    <ligand>
        <name>NAD(+)</name>
        <dbReference type="ChEBI" id="CHEBI:57540"/>
    </ligand>
</feature>
<feature type="binding site" evidence="1">
    <location>
        <begin position="121"/>
        <end position="124"/>
    </location>
    <ligand>
        <name>NAD(+)</name>
        <dbReference type="ChEBI" id="CHEBI:57540"/>
    </ligand>
</feature>
<feature type="binding site" evidence="4">
    <location>
        <position position="126"/>
    </location>
    <ligand>
        <name>substrate</name>
    </ligand>
</feature>
<feature type="binding site" evidence="1">
    <location>
        <position position="130"/>
    </location>
    <ligand>
        <name>NAD(+)</name>
        <dbReference type="ChEBI" id="CHEBI:57540"/>
    </ligand>
</feature>
<feature type="binding site" evidence="1">
    <location>
        <position position="173"/>
    </location>
    <ligand>
        <name>substrate</name>
    </ligand>
</feature>
<feature type="binding site">
    <location>
        <position position="173"/>
    </location>
    <ligand>
        <name>Zn(2+)</name>
        <dbReference type="ChEBI" id="CHEBI:29105"/>
        <note>catalytic</note>
    </ligand>
</feature>
<feature type="binding site">
    <location>
        <position position="253"/>
    </location>
    <ligand>
        <name>Zn(2+)</name>
        <dbReference type="ChEBI" id="CHEBI:29105"/>
        <note>catalytic</note>
    </ligand>
</feature>
<feature type="binding site" evidence="1">
    <location>
        <position position="257"/>
    </location>
    <ligand>
        <name>substrate</name>
    </ligand>
</feature>
<feature type="binding site">
    <location>
        <position position="269"/>
    </location>
    <ligand>
        <name>Zn(2+)</name>
        <dbReference type="ChEBI" id="CHEBI:29105"/>
        <note>catalytic</note>
    </ligand>
</feature>
<feature type="mutagenesis site" description="4-fold and 2-fold increase in activity when NADH and NADPH are used as cosubstrate, respectively. Decrease in affinity for NAD and DHAP, but increase in NADP affinity. No effect on zinc ion affinity." evidence="3">
    <original>D</original>
    <variation>A</variation>
    <location>
        <position position="126"/>
    </location>
</feature>
<feature type="mutagenesis site" description="12-fold and 3-fold increase in activity when NADH and NADPH are used as cosubstrate, respectively. 2- to 9-fold decrease in affinity for substrates. No effect on zinc ion affinity." evidence="3">
    <original>D</original>
    <variation>N</variation>
    <location>
        <position position="126"/>
    </location>
</feature>
<feature type="mutagenesis site" description="Decrease in activity and in affinity for substrates and zinc ion. Loss of activity and zinc binding; when associated with A-253." evidence="3">
    <original>D</original>
    <variation>N</variation>
    <location>
        <position position="173"/>
    </location>
</feature>
<feature type="mutagenesis site" description="Decrease in activity and in affinity for substrates. Loss of activity and zinc binding; when associated with N-173." evidence="3">
    <original>H</original>
    <variation>A</variation>
    <location>
        <position position="253"/>
    </location>
</feature>
<feature type="mutagenesis site" description="Decrease in activity and in zinc ion affinity." evidence="3">
    <original>H</original>
    <variation>A</variation>
    <location>
        <position position="269"/>
    </location>
</feature>
<reference key="1">
    <citation type="journal article" date="1999" name="DNA Res.">
        <title>Complete genome sequence of an aerobic hyper-thermophilic crenarchaeon, Aeropyrum pernix K1.</title>
        <authorList>
            <person name="Kawarabayasi Y."/>
            <person name="Hino Y."/>
            <person name="Horikawa H."/>
            <person name="Yamazaki S."/>
            <person name="Haikawa Y."/>
            <person name="Jin-no K."/>
            <person name="Takahashi M."/>
            <person name="Sekine M."/>
            <person name="Baba S."/>
            <person name="Ankai A."/>
            <person name="Kosugi H."/>
            <person name="Hosoyama A."/>
            <person name="Fukui S."/>
            <person name="Nagai Y."/>
            <person name="Nishijima K."/>
            <person name="Nakazawa H."/>
            <person name="Takamiya M."/>
            <person name="Masuda S."/>
            <person name="Funahashi T."/>
            <person name="Tanaka T."/>
            <person name="Kudoh Y."/>
            <person name="Yamazaki J."/>
            <person name="Kushida N."/>
            <person name="Oguchi A."/>
            <person name="Aoki K."/>
            <person name="Kubota K."/>
            <person name="Nakamura Y."/>
            <person name="Nomura N."/>
            <person name="Sako Y."/>
            <person name="Kikuchi H."/>
        </authorList>
    </citation>
    <scope>NUCLEOTIDE SEQUENCE [LARGE SCALE GENOMIC DNA]</scope>
    <source>
        <strain>ATCC 700893 / DSM 11879 / JCM 9820 / NBRC 100138 / K1</strain>
    </source>
</reference>
<reference key="2">
    <citation type="journal article" date="2002" name="Eur. J. Biochem.">
        <title>Kinetic study of sn-glycerol-1-phosphate dehydrogenase from the aerobic hyperthermophilic archaeon, Aeropyrum pernix K1.</title>
        <authorList>
            <person name="Han J.-S."/>
            <person name="Kosugi Y."/>
            <person name="Ishida H."/>
            <person name="Ishikawa K."/>
        </authorList>
    </citation>
    <scope>PROTEIN SEQUENCE OF N-TERMINUS</scope>
    <scope>FUNCTION</scope>
    <scope>CATALYTIC ACTIVITY</scope>
    <scope>SUBSTRATE SPECIFICITY</scope>
    <scope>SUBUNIT</scope>
    <scope>BIOPHYSICOCHEMICAL PROPERTIES</scope>
    <scope>REACTION MECHANISM</scope>
    <source>
        <strain>ATCC 700893 / DSM 11879 / JCM 9820 / NBRC 100138 / K1</strain>
    </source>
</reference>
<reference key="3">
    <citation type="journal article" date="2005" name="Archaea">
        <title>Active site of Zn(2+)-dependent sn-glycerol-1-phosphate dehydrogenase from Aeropyrum pernix K1.</title>
        <authorList>
            <person name="Han J.-S."/>
            <person name="Ishikawa K."/>
        </authorList>
    </citation>
    <scope>FUNCTION</scope>
    <scope>COFACTOR</scope>
    <scope>ACTIVITY REGULATION</scope>
    <scope>METAL-BINDING SITES</scope>
    <scope>MUTAGENESIS OF ASP-126; ASP-173; HIS-253 AND HIS-269</scope>
    <source>
        <strain>ATCC 700893 / DSM 11879 / JCM 9820 / NBRC 100138 / K1</strain>
    </source>
</reference>
<evidence type="ECO:0000250" key="1"/>
<evidence type="ECO:0000269" key="2">
    <source>
    </source>
</evidence>
<evidence type="ECO:0000269" key="3">
    <source>
    </source>
</evidence>
<evidence type="ECO:0000305" key="4"/>
<protein>
    <recommendedName>
        <fullName>Glycerol-1-phosphate dehydrogenase [NAD(P)+]</fullName>
        <shortName>G1P dehydrogenase</shortName>
        <shortName>G1PDH</shortName>
        <shortName>Gro1PDH</shortName>
        <ecNumber evidence="2">1.1.1.261</ecNumber>
    </recommendedName>
    <alternativeName>
        <fullName>Enantiomeric glycerophosphate synthase</fullName>
    </alternativeName>
    <alternativeName>
        <fullName>sn-glycerol-1-phosphate dehydrogenase</fullName>
    </alternativeName>
</protein>
<organism>
    <name type="scientific">Aeropyrum pernix (strain ATCC 700893 / DSM 11879 / JCM 9820 / NBRC 100138 / K1)</name>
    <dbReference type="NCBI Taxonomy" id="272557"/>
    <lineage>
        <taxon>Archaea</taxon>
        <taxon>Thermoproteota</taxon>
        <taxon>Thermoprotei</taxon>
        <taxon>Desulfurococcales</taxon>
        <taxon>Desulfurococcaceae</taxon>
        <taxon>Aeropyrum</taxon>
    </lineage>
</organism>
<gene>
    <name type="primary">egsA</name>
    <name type="ordered locus">APE_0519.1</name>
</gene>
<sequence length="352" mass="37667">MYTSFHRIDLPRTIVVGGGVLDKAGGYVSGVAQRGSYVLVVSGPTVSSKYFERLRASLEAEGLTVGLKIIRDATVETAEEVAREALESRIEVVAGLGGGKSIDVAKYASKRAGSVFVSIPTVASHDGITSPFSSLKGFDKPISRPAKAPEAIIIDVDVIAEAPRRYNIAGFGDLIGKYTAVLDWRLAHKLRLEYYGEYAASLALLSAKHVSQYAEEIALGTREGYRVLLEALVSSGVSMCIAGSTRPASGSEHLFAHALHIVARNKPLHGEAVGVGTIMMAYLHGKNWRRIRGLLKTVGAPTNAKELGVEDDEVVEALTIAARIRPERYTILGEKGLTREAAEALARKTGVI</sequence>
<comment type="function">
    <text evidence="2 3">Catalyzes the NAD(P)H-dependent reduction of dihydroxyacetonephosphate (DHAP or glycerone phosphate) to glycerol 1-phosphate (G1P). The G1P thus generated is used as the glycerophosphate backbone of phospholipids in the cellular membranes of Archaea. Is also able to catalyze the reverse reaction, i.e. the NAD(+)-dependent oxidation of G1P but not of G3P. Is not active toward glycerol, dihydroxyacetone, glyceraldehyde phosphate, and glycerol-2-phosphate.</text>
</comment>
<comment type="catalytic activity">
    <reaction evidence="2">
        <text>sn-glycerol 1-phosphate + NAD(+) = dihydroxyacetone phosphate + NADH + H(+)</text>
        <dbReference type="Rhea" id="RHEA:21412"/>
        <dbReference type="ChEBI" id="CHEBI:15378"/>
        <dbReference type="ChEBI" id="CHEBI:57540"/>
        <dbReference type="ChEBI" id="CHEBI:57642"/>
        <dbReference type="ChEBI" id="CHEBI:57685"/>
        <dbReference type="ChEBI" id="CHEBI:57945"/>
        <dbReference type="EC" id="1.1.1.261"/>
    </reaction>
</comment>
<comment type="catalytic activity">
    <reaction evidence="2">
        <text>sn-glycerol 1-phosphate + NADP(+) = dihydroxyacetone phosphate + NADPH + H(+)</text>
        <dbReference type="Rhea" id="RHEA:21416"/>
        <dbReference type="ChEBI" id="CHEBI:15378"/>
        <dbReference type="ChEBI" id="CHEBI:57642"/>
        <dbReference type="ChEBI" id="CHEBI:57685"/>
        <dbReference type="ChEBI" id="CHEBI:57783"/>
        <dbReference type="ChEBI" id="CHEBI:58349"/>
        <dbReference type="EC" id="1.1.1.261"/>
    </reaction>
</comment>
<comment type="cofactor">
    <cofactor evidence="3">
        <name>Zn(2+)</name>
        <dbReference type="ChEBI" id="CHEBI:29105"/>
    </cofactor>
    <text evidence="3">Binds 1 zinc ion per subunit.</text>
</comment>
<comment type="activity regulation">
    <text evidence="3">Totally inhibited by EDTA in vitro.</text>
</comment>
<comment type="biophysicochemical properties">
    <kinetics>
        <KM evidence="2">0.46 mM for DHAP (in the presence of NADH as coenzyme)</KM>
        <KM evidence="2">0.29 mM for DHAP (in the presence of NADPH as coenzyme)</KM>
        <KM evidence="2">0.032 mM for NADH</KM>
        <KM evidence="2">0.044 mM for NADPH</KM>
        <KM evidence="2">8.92 mM for G1P</KM>
        <KM evidence="2">1.57 mM for NAD(+)</KM>
    </kinetics>
    <temperatureDependence>
        <text evidence="2">Optimum temperature is 94-96 degrees Celsius. Over 96 degrees Celsius, the activity decreases dramatically. Hyperthermostable. The half-life of activity is 30 minutes at 95 degrees Celsius and increases to 2 hours at 90 degrees Celsius.</text>
    </temperatureDependence>
</comment>
<comment type="pathway">
    <text>Membrane lipid metabolism; glycerophospholipid metabolism.</text>
</comment>
<comment type="subunit">
    <text evidence="2">Homodimer.</text>
</comment>
<comment type="subcellular location">
    <subcellularLocation>
        <location evidence="4">Cytoplasm</location>
    </subcellularLocation>
</comment>
<comment type="miscellaneous">
    <text>Catalysis proceeds by an orered bi-bi kinetic mechanism.</text>
</comment>
<comment type="similarity">
    <text evidence="4">Belongs to the glycerol-1-phosphate dehydrogenase family.</text>
</comment>
<accession>Q9YER2</accession>
<keyword id="KW-0963">Cytoplasm</keyword>
<keyword id="KW-0903">Direct protein sequencing</keyword>
<keyword id="KW-0444">Lipid biosynthesis</keyword>
<keyword id="KW-0443">Lipid metabolism</keyword>
<keyword id="KW-0479">Metal-binding</keyword>
<keyword id="KW-0520">NAD</keyword>
<keyword id="KW-0521">NADP</keyword>
<keyword id="KW-0560">Oxidoreductase</keyword>
<keyword id="KW-0594">Phospholipid biosynthesis</keyword>
<keyword id="KW-1208">Phospholipid metabolism</keyword>
<keyword id="KW-1185">Reference proteome</keyword>
<keyword id="KW-0862">Zinc</keyword>
<name>G1PDH_AERPE</name>
<dbReference type="EC" id="1.1.1.261" evidence="2"/>
<dbReference type="EMBL" id="BA000002">
    <property type="protein sequence ID" value="BAA79484.2"/>
    <property type="molecule type" value="Genomic_DNA"/>
</dbReference>
<dbReference type="PIR" id="H72748">
    <property type="entry name" value="H72748"/>
</dbReference>
<dbReference type="RefSeq" id="WP_010865807.1">
    <property type="nucleotide sequence ID" value="NC_000854.2"/>
</dbReference>
<dbReference type="SMR" id="Q9YER2"/>
<dbReference type="STRING" id="272557.APE_0519.1"/>
<dbReference type="EnsemblBacteria" id="BAA79484">
    <property type="protein sequence ID" value="BAA79484"/>
    <property type="gene ID" value="APE_0519.1"/>
</dbReference>
<dbReference type="GeneID" id="1444695"/>
<dbReference type="KEGG" id="ape:APE_0519.1"/>
<dbReference type="PATRIC" id="fig|272557.25.peg.391"/>
<dbReference type="eggNOG" id="arCOG00982">
    <property type="taxonomic scope" value="Archaea"/>
</dbReference>
<dbReference type="BioCyc" id="MetaCyc:MONOMER-22058"/>
<dbReference type="SABIO-RK" id="Q9YER2"/>
<dbReference type="UniPathway" id="UPA00940"/>
<dbReference type="Proteomes" id="UP000002518">
    <property type="component" value="Chromosome"/>
</dbReference>
<dbReference type="GO" id="GO:0005737">
    <property type="term" value="C:cytoplasm"/>
    <property type="evidence" value="ECO:0007669"/>
    <property type="project" value="UniProtKB-SubCell"/>
</dbReference>
<dbReference type="GO" id="GO:0106357">
    <property type="term" value="F:glycerol-1-phosphate dehydrogenase (NAD+) activity"/>
    <property type="evidence" value="ECO:0007669"/>
    <property type="project" value="RHEA"/>
</dbReference>
<dbReference type="GO" id="GO:0106358">
    <property type="term" value="F:glycerol-1-phosphate dehydrogenase (NADP+) activity"/>
    <property type="evidence" value="ECO:0007669"/>
    <property type="project" value="RHEA"/>
</dbReference>
<dbReference type="GO" id="GO:0046872">
    <property type="term" value="F:metal ion binding"/>
    <property type="evidence" value="ECO:0007669"/>
    <property type="project" value="UniProtKB-KW"/>
</dbReference>
<dbReference type="GO" id="GO:0006650">
    <property type="term" value="P:glycerophospholipid metabolic process"/>
    <property type="evidence" value="ECO:0007669"/>
    <property type="project" value="UniProtKB-UniRule"/>
</dbReference>
<dbReference type="GO" id="GO:0008654">
    <property type="term" value="P:phospholipid biosynthetic process"/>
    <property type="evidence" value="ECO:0007669"/>
    <property type="project" value="UniProtKB-KW"/>
</dbReference>
<dbReference type="CDD" id="cd08173">
    <property type="entry name" value="Gro1PDH"/>
    <property type="match status" value="1"/>
</dbReference>
<dbReference type="Gene3D" id="3.40.50.1970">
    <property type="match status" value="1"/>
</dbReference>
<dbReference type="Gene3D" id="1.20.1090.10">
    <property type="entry name" value="Dehydroquinate synthase-like - alpha domain"/>
    <property type="match status" value="1"/>
</dbReference>
<dbReference type="HAMAP" id="MF_00497_A">
    <property type="entry name" value="G1P_dehydrogenase_A"/>
    <property type="match status" value="1"/>
</dbReference>
<dbReference type="InterPro" id="IPR023002">
    <property type="entry name" value="G1P_dehydrogenase_arc"/>
</dbReference>
<dbReference type="InterPro" id="IPR032837">
    <property type="entry name" value="G1PDH"/>
</dbReference>
<dbReference type="InterPro" id="IPR016205">
    <property type="entry name" value="Glycerol_DH"/>
</dbReference>
<dbReference type="NCBIfam" id="NF002022">
    <property type="entry name" value="PRK00843.1"/>
    <property type="match status" value="1"/>
</dbReference>
<dbReference type="PANTHER" id="PTHR43616">
    <property type="entry name" value="GLYCEROL DEHYDROGENASE"/>
    <property type="match status" value="1"/>
</dbReference>
<dbReference type="PANTHER" id="PTHR43616:SF5">
    <property type="entry name" value="GLYCEROL DEHYDROGENASE 1"/>
    <property type="match status" value="1"/>
</dbReference>
<dbReference type="Pfam" id="PF13685">
    <property type="entry name" value="Fe-ADH_2"/>
    <property type="match status" value="1"/>
</dbReference>
<dbReference type="PIRSF" id="PIRSF000112">
    <property type="entry name" value="Glycerol_dehydrogenase"/>
    <property type="match status" value="1"/>
</dbReference>
<dbReference type="SUPFAM" id="SSF56796">
    <property type="entry name" value="Dehydroquinate synthase-like"/>
    <property type="match status" value="1"/>
</dbReference>
<proteinExistence type="evidence at protein level"/>